<feature type="chain" id="PRO_0000158207" description="Histidine biosynthesis bifunctional protein HisB">
    <location>
        <begin position="1"/>
        <end position="355"/>
    </location>
</feature>
<feature type="region of interest" description="Histidinol-phosphatase" evidence="1">
    <location>
        <begin position="1"/>
        <end position="166"/>
    </location>
</feature>
<feature type="region of interest" description="Imidazoleglycerol-phosphate dehydratase" evidence="1">
    <location>
        <begin position="167"/>
        <end position="355"/>
    </location>
</feature>
<feature type="active site" description="Nucleophile" evidence="1">
    <location>
        <position position="9"/>
    </location>
</feature>
<feature type="active site" description="Proton donor" evidence="1">
    <location>
        <position position="11"/>
    </location>
</feature>
<feature type="binding site" evidence="1">
    <location>
        <position position="9"/>
    </location>
    <ligand>
        <name>Mg(2+)</name>
        <dbReference type="ChEBI" id="CHEBI:18420"/>
    </ligand>
</feature>
<feature type="binding site" evidence="1">
    <location>
        <position position="11"/>
    </location>
    <ligand>
        <name>Mg(2+)</name>
        <dbReference type="ChEBI" id="CHEBI:18420"/>
    </ligand>
</feature>
<feature type="binding site" evidence="1">
    <location>
        <position position="93"/>
    </location>
    <ligand>
        <name>Zn(2+)</name>
        <dbReference type="ChEBI" id="CHEBI:29105"/>
    </ligand>
</feature>
<feature type="binding site" evidence="1">
    <location>
        <position position="95"/>
    </location>
    <ligand>
        <name>Zn(2+)</name>
        <dbReference type="ChEBI" id="CHEBI:29105"/>
    </ligand>
</feature>
<feature type="binding site" evidence="1">
    <location>
        <position position="101"/>
    </location>
    <ligand>
        <name>Zn(2+)</name>
        <dbReference type="ChEBI" id="CHEBI:29105"/>
    </ligand>
</feature>
<feature type="binding site" evidence="1">
    <location>
        <position position="103"/>
    </location>
    <ligand>
        <name>Zn(2+)</name>
        <dbReference type="ChEBI" id="CHEBI:29105"/>
    </ligand>
</feature>
<feature type="binding site" evidence="1">
    <location>
        <position position="130"/>
    </location>
    <ligand>
        <name>Mg(2+)</name>
        <dbReference type="ChEBI" id="CHEBI:18420"/>
    </ligand>
</feature>
<keyword id="KW-0028">Amino-acid biosynthesis</keyword>
<keyword id="KW-0963">Cytoplasm</keyword>
<keyword id="KW-0368">Histidine biosynthesis</keyword>
<keyword id="KW-0378">Hydrolase</keyword>
<keyword id="KW-0456">Lyase</keyword>
<keyword id="KW-0460">Magnesium</keyword>
<keyword id="KW-0479">Metal-binding</keyword>
<keyword id="KW-0511">Multifunctional enzyme</keyword>
<keyword id="KW-1185">Reference proteome</keyword>
<keyword id="KW-0862">Zinc</keyword>
<evidence type="ECO:0000255" key="1">
    <source>
        <dbReference type="HAMAP-Rule" id="MF_01022"/>
    </source>
</evidence>
<evidence type="ECO:0000305" key="2"/>
<dbReference type="EC" id="3.1.3.15" evidence="1"/>
<dbReference type="EC" id="4.2.1.19" evidence="1"/>
<dbReference type="EMBL" id="AE014075">
    <property type="protein sequence ID" value="AAN81004.1"/>
    <property type="status" value="ALT_INIT"/>
    <property type="molecule type" value="Genomic_DNA"/>
</dbReference>
<dbReference type="RefSeq" id="WP_000080122.1">
    <property type="nucleotide sequence ID" value="NZ_CP051263.1"/>
</dbReference>
<dbReference type="SMR" id="Q8FG50"/>
<dbReference type="STRING" id="199310.c2549"/>
<dbReference type="KEGG" id="ecc:c2549"/>
<dbReference type="eggNOG" id="COG0131">
    <property type="taxonomic scope" value="Bacteria"/>
</dbReference>
<dbReference type="eggNOG" id="COG0241">
    <property type="taxonomic scope" value="Bacteria"/>
</dbReference>
<dbReference type="HOGENOM" id="CLU_044308_0_0_6"/>
<dbReference type="UniPathway" id="UPA00031">
    <property type="reaction ID" value="UER00011"/>
</dbReference>
<dbReference type="UniPathway" id="UPA00031">
    <property type="reaction ID" value="UER00013"/>
</dbReference>
<dbReference type="Proteomes" id="UP000001410">
    <property type="component" value="Chromosome"/>
</dbReference>
<dbReference type="GO" id="GO:0005737">
    <property type="term" value="C:cytoplasm"/>
    <property type="evidence" value="ECO:0007669"/>
    <property type="project" value="UniProtKB-SubCell"/>
</dbReference>
<dbReference type="GO" id="GO:0004401">
    <property type="term" value="F:histidinol-phosphatase activity"/>
    <property type="evidence" value="ECO:0007669"/>
    <property type="project" value="UniProtKB-UniRule"/>
</dbReference>
<dbReference type="GO" id="GO:0004424">
    <property type="term" value="F:imidazoleglycerol-phosphate dehydratase activity"/>
    <property type="evidence" value="ECO:0007669"/>
    <property type="project" value="UniProtKB-UniRule"/>
</dbReference>
<dbReference type="GO" id="GO:0046872">
    <property type="term" value="F:metal ion binding"/>
    <property type="evidence" value="ECO:0007669"/>
    <property type="project" value="UniProtKB-KW"/>
</dbReference>
<dbReference type="GO" id="GO:0000105">
    <property type="term" value="P:L-histidine biosynthetic process"/>
    <property type="evidence" value="ECO:0007669"/>
    <property type="project" value="UniProtKB-UniRule"/>
</dbReference>
<dbReference type="CDD" id="cd07503">
    <property type="entry name" value="HAD_HisB-N"/>
    <property type="match status" value="1"/>
</dbReference>
<dbReference type="CDD" id="cd07914">
    <property type="entry name" value="IGPD"/>
    <property type="match status" value="1"/>
</dbReference>
<dbReference type="FunFam" id="3.40.50.1000:FF:000061">
    <property type="entry name" value="Histidine biosynthesis bifunctional protein HisB"/>
    <property type="match status" value="1"/>
</dbReference>
<dbReference type="FunFam" id="3.30.230.40:FF:000001">
    <property type="entry name" value="Imidazoleglycerol-phosphate dehydratase HisB"/>
    <property type="match status" value="1"/>
</dbReference>
<dbReference type="FunFam" id="3.30.230.40:FF:000003">
    <property type="entry name" value="Imidazoleglycerol-phosphate dehydratase HisB"/>
    <property type="match status" value="1"/>
</dbReference>
<dbReference type="Gene3D" id="3.40.50.1000">
    <property type="entry name" value="HAD superfamily/HAD-like"/>
    <property type="match status" value="1"/>
</dbReference>
<dbReference type="Gene3D" id="3.30.230.40">
    <property type="entry name" value="Imidazole glycerol phosphate dehydratase, domain 1"/>
    <property type="match status" value="2"/>
</dbReference>
<dbReference type="HAMAP" id="MF_01022">
    <property type="entry name" value="Bifunc_HisB"/>
    <property type="match status" value="1"/>
</dbReference>
<dbReference type="HAMAP" id="MF_00076">
    <property type="entry name" value="HisB"/>
    <property type="match status" value="1"/>
</dbReference>
<dbReference type="InterPro" id="IPR036412">
    <property type="entry name" value="HAD-like_sf"/>
</dbReference>
<dbReference type="InterPro" id="IPR006549">
    <property type="entry name" value="HAD-SF_hydro_IIIA"/>
</dbReference>
<dbReference type="InterPro" id="IPR023214">
    <property type="entry name" value="HAD_sf"/>
</dbReference>
<dbReference type="InterPro" id="IPR020566">
    <property type="entry name" value="His_synth_bifunc_HisB"/>
</dbReference>
<dbReference type="InterPro" id="IPR005954">
    <property type="entry name" value="HisB_N"/>
</dbReference>
<dbReference type="InterPro" id="IPR006543">
    <property type="entry name" value="Histidinol-phos"/>
</dbReference>
<dbReference type="InterPro" id="IPR038494">
    <property type="entry name" value="IGPD_sf"/>
</dbReference>
<dbReference type="InterPro" id="IPR000807">
    <property type="entry name" value="ImidazoleglycerolP_deHydtase"/>
</dbReference>
<dbReference type="InterPro" id="IPR020565">
    <property type="entry name" value="ImidazoleglycerP_deHydtase_CS"/>
</dbReference>
<dbReference type="InterPro" id="IPR020568">
    <property type="entry name" value="Ribosomal_Su5_D2-typ_SF"/>
</dbReference>
<dbReference type="NCBIfam" id="TIGR01662">
    <property type="entry name" value="HAD-SF-IIIA"/>
    <property type="match status" value="1"/>
</dbReference>
<dbReference type="NCBIfam" id="TIGR01261">
    <property type="entry name" value="hisB_Nterm"/>
    <property type="match status" value="1"/>
</dbReference>
<dbReference type="NCBIfam" id="TIGR01656">
    <property type="entry name" value="Histidinol-ppas"/>
    <property type="match status" value="1"/>
</dbReference>
<dbReference type="NCBIfam" id="NF002111">
    <property type="entry name" value="PRK00951.2-1"/>
    <property type="match status" value="1"/>
</dbReference>
<dbReference type="NCBIfam" id="NF002114">
    <property type="entry name" value="PRK00951.2-4"/>
    <property type="match status" value="1"/>
</dbReference>
<dbReference type="NCBIfam" id="NF003937">
    <property type="entry name" value="PRK05446.1"/>
    <property type="match status" value="1"/>
</dbReference>
<dbReference type="PANTHER" id="PTHR23133:SF2">
    <property type="entry name" value="IMIDAZOLEGLYCEROL-PHOSPHATE DEHYDRATASE"/>
    <property type="match status" value="1"/>
</dbReference>
<dbReference type="PANTHER" id="PTHR23133">
    <property type="entry name" value="IMIDAZOLEGLYCEROL-PHOSPHATE DEHYDRATASE HIS7"/>
    <property type="match status" value="1"/>
</dbReference>
<dbReference type="Pfam" id="PF13242">
    <property type="entry name" value="Hydrolase_like"/>
    <property type="match status" value="1"/>
</dbReference>
<dbReference type="Pfam" id="PF00475">
    <property type="entry name" value="IGPD"/>
    <property type="match status" value="1"/>
</dbReference>
<dbReference type="SUPFAM" id="SSF56784">
    <property type="entry name" value="HAD-like"/>
    <property type="match status" value="1"/>
</dbReference>
<dbReference type="SUPFAM" id="SSF54211">
    <property type="entry name" value="Ribosomal protein S5 domain 2-like"/>
    <property type="match status" value="2"/>
</dbReference>
<dbReference type="PROSITE" id="PS00954">
    <property type="entry name" value="IGP_DEHYDRATASE_1"/>
    <property type="match status" value="1"/>
</dbReference>
<dbReference type="PROSITE" id="PS00955">
    <property type="entry name" value="IGP_DEHYDRATASE_2"/>
    <property type="match status" value="1"/>
</dbReference>
<comment type="catalytic activity">
    <reaction evidence="1">
        <text>D-erythro-1-(imidazol-4-yl)glycerol 3-phosphate = 3-(imidazol-4-yl)-2-oxopropyl phosphate + H2O</text>
        <dbReference type="Rhea" id="RHEA:11040"/>
        <dbReference type="ChEBI" id="CHEBI:15377"/>
        <dbReference type="ChEBI" id="CHEBI:57766"/>
        <dbReference type="ChEBI" id="CHEBI:58278"/>
        <dbReference type="EC" id="4.2.1.19"/>
    </reaction>
</comment>
<comment type="catalytic activity">
    <reaction evidence="1">
        <text>L-histidinol phosphate + H2O = L-histidinol + phosphate</text>
        <dbReference type="Rhea" id="RHEA:14465"/>
        <dbReference type="ChEBI" id="CHEBI:15377"/>
        <dbReference type="ChEBI" id="CHEBI:43474"/>
        <dbReference type="ChEBI" id="CHEBI:57699"/>
        <dbReference type="ChEBI" id="CHEBI:57980"/>
        <dbReference type="EC" id="3.1.3.15"/>
    </reaction>
</comment>
<comment type="cofactor">
    <cofactor evidence="1">
        <name>Mg(2+)</name>
        <dbReference type="ChEBI" id="CHEBI:18420"/>
    </cofactor>
</comment>
<comment type="cofactor">
    <cofactor evidence="1">
        <name>Zn(2+)</name>
        <dbReference type="ChEBI" id="CHEBI:29105"/>
    </cofactor>
</comment>
<comment type="pathway">
    <text evidence="1">Amino-acid biosynthesis; L-histidine biosynthesis; L-histidine from 5-phospho-alpha-D-ribose 1-diphosphate: step 6/9.</text>
</comment>
<comment type="pathway">
    <text evidence="1">Amino-acid biosynthesis; L-histidine biosynthesis; L-histidine from 5-phospho-alpha-D-ribose 1-diphosphate: step 8/9.</text>
</comment>
<comment type="subcellular location">
    <subcellularLocation>
        <location evidence="1">Cytoplasm</location>
    </subcellularLocation>
</comment>
<comment type="similarity">
    <text evidence="1">In the N-terminal section; belongs to the histidinol-phosphatase family.</text>
</comment>
<comment type="similarity">
    <text evidence="1">In the C-terminal section; belongs to the imidazoleglycerol-phosphate dehydratase family.</text>
</comment>
<comment type="sequence caution" evidence="2">
    <conflict type="erroneous initiation">
        <sequence resource="EMBL-CDS" id="AAN81004"/>
    </conflict>
</comment>
<accession>Q8FG50</accession>
<reference key="1">
    <citation type="journal article" date="2002" name="Proc. Natl. Acad. Sci. U.S.A.">
        <title>Extensive mosaic structure revealed by the complete genome sequence of uropathogenic Escherichia coli.</title>
        <authorList>
            <person name="Welch R.A."/>
            <person name="Burland V."/>
            <person name="Plunkett G. III"/>
            <person name="Redford P."/>
            <person name="Roesch P."/>
            <person name="Rasko D."/>
            <person name="Buckles E.L."/>
            <person name="Liou S.-R."/>
            <person name="Boutin A."/>
            <person name="Hackett J."/>
            <person name="Stroud D."/>
            <person name="Mayhew G.F."/>
            <person name="Rose D.J."/>
            <person name="Zhou S."/>
            <person name="Schwartz D.C."/>
            <person name="Perna N.T."/>
            <person name="Mobley H.L.T."/>
            <person name="Donnenberg M.S."/>
            <person name="Blattner F.R."/>
        </authorList>
    </citation>
    <scope>NUCLEOTIDE SEQUENCE [LARGE SCALE GENOMIC DNA]</scope>
    <source>
        <strain>CFT073 / ATCC 700928 / UPEC</strain>
    </source>
</reference>
<gene>
    <name evidence="1" type="primary">hisB</name>
    <name type="ordered locus">c2549</name>
</gene>
<organism>
    <name type="scientific">Escherichia coli O6:H1 (strain CFT073 / ATCC 700928 / UPEC)</name>
    <dbReference type="NCBI Taxonomy" id="199310"/>
    <lineage>
        <taxon>Bacteria</taxon>
        <taxon>Pseudomonadati</taxon>
        <taxon>Pseudomonadota</taxon>
        <taxon>Gammaproteobacteria</taxon>
        <taxon>Enterobacterales</taxon>
        <taxon>Enterobacteriaceae</taxon>
        <taxon>Escherichia</taxon>
    </lineage>
</organism>
<protein>
    <recommendedName>
        <fullName evidence="1">Histidine biosynthesis bifunctional protein HisB</fullName>
    </recommendedName>
    <domain>
        <recommendedName>
            <fullName evidence="1">Histidinol-phosphatase</fullName>
            <ecNumber evidence="1">3.1.3.15</ecNumber>
        </recommendedName>
    </domain>
    <domain>
        <recommendedName>
            <fullName evidence="1">Imidazoleglycerol-phosphate dehydratase</fullName>
            <shortName evidence="1">IGPD</shortName>
            <ecNumber evidence="1">4.2.1.19</ecNumber>
        </recommendedName>
    </domain>
</protein>
<sequence length="355" mass="40303">MSQKYLFIDRDGTLISEPPSDFQVDRFDKLAFEPGVIPELLRLQKAGYKLVMITNQDGLGTQSFPQADFDGPHNLMMQIFTSQGVQFDEVLICPHLPADECDCRKPKVKLVERYLAEQAMDRANSYVIGDRATDIQLAENMGINGLRYDREILNWPMIGEQLTKRDRYAHVVRNTKETQIDVQVWLDREGGSKINTGVGFFDHMLDQIATHGGFRMEINVKGDLYIDDHHTVEDTGLALGEALKIALGDKRGICRFGFVLPMDECLARCALDISGRPHLEYKAEFTYQRVGDLSTEMIEHFFRSLSYTMGVTLHLKTKGKNDHHRVESLFKAFGRTLRQAIRVEGDTLPSSKGVL</sequence>
<name>HIS7_ECOL6</name>
<proteinExistence type="inferred from homology"/>